<comment type="function">
    <text evidence="1">Minor capsid protein.</text>
</comment>
<comment type="subcellular location">
    <subcellularLocation>
        <location evidence="1">Virion</location>
    </subcellularLocation>
    <text evidence="1">Present in 3-10 copies per virion. The readthrough extensions are probably located on the exterior of the capsid.</text>
</comment>
<comment type="miscellaneous">
    <text evidence="1">This protein is translated as a fusion protein by episodic readthrough of the termination codon at the end of the capsid protein. Readthrough of the terminator codon occurs between the codons for Tyr-133 and Trp-134, thereby producing the readthrough extension.</text>
</comment>
<reference key="1">
    <citation type="journal article" date="1995" name="J. Mol. Biol.">
        <title>Secondary structure model for the last two domains of single-stranded RNA phage Q beta.</title>
        <authorList>
            <person name="Beekwilder M.J."/>
            <person name="Nieuwenhuizen R."/>
            <person name="van Duin J."/>
        </authorList>
    </citation>
    <scope>NUCLEOTIDE SEQUENCE [GENOMIC RNA]</scope>
</reference>
<reference key="2">
    <citation type="journal article" date="1996" name="J. Mol. Biol.">
        <title>Secondary structure model for the first three domains of Q beta RNA. Control of A-protein synthesis.</title>
        <authorList>
            <person name="Beekwilder J."/>
            <person name="Nieuwenhuizen R."/>
            <person name="Poot R."/>
            <person name="van Duin J."/>
        </authorList>
    </citation>
    <scope>NUCLEOTIDE SEQUENCE [GENOMIC RNA]</scope>
</reference>
<protein>
    <recommendedName>
        <fullName>Minor capsid protein A1</fullName>
    </recommendedName>
</protein>
<feature type="chain" id="PRO_0000402537" description="Minor capsid protein A1">
    <location>
        <begin position="1"/>
        <end position="329"/>
    </location>
</feature>
<feature type="region of interest" description="Disordered" evidence="2">
    <location>
        <begin position="143"/>
        <end position="162"/>
    </location>
</feature>
<feature type="compositionally biased region" description="Pro residues" evidence="2">
    <location>
        <begin position="145"/>
        <end position="161"/>
    </location>
</feature>
<name>A1_BPMX1</name>
<keyword id="KW-0167">Capsid protein</keyword>
<keyword id="KW-1185">Reference proteome</keyword>
<keyword id="KW-1159">RNA suppression of termination</keyword>
<keyword id="KW-0946">Virion</keyword>
<dbReference type="EMBL" id="AF059242">
    <property type="protein sequence ID" value="AAC14700.1"/>
    <property type="molecule type" value="Genomic_RNA"/>
</dbReference>
<dbReference type="RefSeq" id="NP_046750.1">
    <property type="nucleotide sequence ID" value="NC_001890.1"/>
</dbReference>
<dbReference type="SMR" id="O64307"/>
<dbReference type="GeneID" id="1261503"/>
<dbReference type="KEGG" id="vg:1261503"/>
<dbReference type="Proteomes" id="UP000001832">
    <property type="component" value="Genome"/>
</dbReference>
<dbReference type="GO" id="GO:0019028">
    <property type="term" value="C:viral capsid"/>
    <property type="evidence" value="ECO:0007669"/>
    <property type="project" value="UniProtKB-KW"/>
</dbReference>
<dbReference type="GO" id="GO:0005198">
    <property type="term" value="F:structural molecule activity"/>
    <property type="evidence" value="ECO:0007669"/>
    <property type="project" value="InterPro"/>
</dbReference>
<dbReference type="Gene3D" id="3.30.380.10">
    <property type="entry name" value="MS2 Viral Coat Protein"/>
    <property type="match status" value="1"/>
</dbReference>
<dbReference type="InterPro" id="IPR002703">
    <property type="entry name" value="Levivir_coat"/>
</dbReference>
<dbReference type="InterPro" id="IPR015954">
    <property type="entry name" value="Phage_RNA-type_capsid"/>
</dbReference>
<dbReference type="InterPro" id="IPR031819">
    <property type="entry name" value="Read-through_dom"/>
</dbReference>
<dbReference type="Pfam" id="PF01819">
    <property type="entry name" value="Levi_coat"/>
    <property type="match status" value="1"/>
</dbReference>
<dbReference type="Pfam" id="PF16814">
    <property type="entry name" value="Read-through"/>
    <property type="match status" value="1"/>
</dbReference>
<dbReference type="SUPFAM" id="SSF55405">
    <property type="entry name" value="RNA bacteriophage capsid protein"/>
    <property type="match status" value="1"/>
</dbReference>
<organism>
    <name type="scientific">Qbeta virus (strain MX1)</name>
    <dbReference type="NCBI Taxonomy" id="2789016"/>
    <lineage>
        <taxon>Viruses</taxon>
        <taxon>Riboviria</taxon>
        <taxon>Orthornavirae</taxon>
        <taxon>Lenarviricota</taxon>
        <taxon>Leviviricetes</taxon>
        <taxon>Norzivirales</taxon>
        <taxon>Fiersviridae</taxon>
        <taxon>Qubevirus</taxon>
        <taxon>Escherichia virus Qbeta</taxon>
    </lineage>
</organism>
<proteinExistence type="inferred from homology"/>
<sequence length="329" mass="35880">MAKLQAITLSGIGKNGDVTLNLNPRGVNPTNGVAALSEAGAVPALEKRVTISVSQPSRNRKNYKVQVKIQNPTSCTASGTCDPSVTRSAYADVTFSFTQYSTDEERALVRTELKALLADPMLIDAIDNLNPAYWTALLGDGSGPSPVPGPNPDPPLEPPPGTGSYTCPFRIWDLSSIYEAANSSHSWDIYNAVELSPRKFDVTLDDLLGNTDWRDWDGRLRYTTFRGSRGNGYIDLDATSLMQDEYLTSSKYLVREGKRPGAFGSIERFVYLKSINAYCSLSDITAYHSDGVVVGFWRDPSSGGAIPFDFSEFDSNKCPIQAVIVVPRL</sequence>
<evidence type="ECO:0000250" key="1">
    <source>
        <dbReference type="UniProtKB" id="Q8LTE1"/>
    </source>
</evidence>
<evidence type="ECO:0000256" key="2">
    <source>
        <dbReference type="SAM" id="MobiDB-lite"/>
    </source>
</evidence>
<organismHost>
    <name type="scientific">Escherichia coli</name>
    <dbReference type="NCBI Taxonomy" id="562"/>
</organismHost>
<accession>O64307</accession>